<dbReference type="EC" id="2.7.10.2"/>
<dbReference type="EMBL" id="M11917">
    <property type="protein sequence ID" value="AAA28913.1"/>
    <property type="molecule type" value="mRNA"/>
</dbReference>
<dbReference type="EMBL" id="AE014296">
    <property type="protein sequence ID" value="AAF47922.1"/>
    <property type="molecule type" value="Genomic_DNA"/>
</dbReference>
<dbReference type="EMBL" id="AE014296">
    <property type="protein sequence ID" value="AAX52734.1"/>
    <property type="molecule type" value="Genomic_DNA"/>
</dbReference>
<dbReference type="EMBL" id="AE014296">
    <property type="protein sequence ID" value="AAX52735.1"/>
    <property type="molecule type" value="Genomic_DNA"/>
</dbReference>
<dbReference type="EMBL" id="AE014296">
    <property type="protein sequence ID" value="AAX52736.1"/>
    <property type="molecule type" value="Genomic_DNA"/>
</dbReference>
<dbReference type="EMBL" id="AE014296">
    <property type="protein sequence ID" value="AAX52737.1"/>
    <property type="molecule type" value="Genomic_DNA"/>
</dbReference>
<dbReference type="EMBL" id="AY051781">
    <property type="protein sequence ID" value="AAK93205.1"/>
    <property type="molecule type" value="mRNA"/>
</dbReference>
<dbReference type="EMBL" id="K01043">
    <property type="protein sequence ID" value="AAA28489.1"/>
    <property type="molecule type" value="Genomic_DNA"/>
</dbReference>
<dbReference type="EMBL" id="AJ002919">
    <property type="protein sequence ID" value="CAA05754.1"/>
    <property type="molecule type" value="Genomic_DNA"/>
</dbReference>
<dbReference type="RefSeq" id="NP_001014561.1">
    <property type="nucleotide sequence ID" value="NM_001014561.2"/>
</dbReference>
<dbReference type="RefSeq" id="NP_001014562.1">
    <property type="nucleotide sequence ID" value="NM_001014562.3"/>
</dbReference>
<dbReference type="RefSeq" id="NP_001014563.1">
    <property type="nucleotide sequence ID" value="NM_001014563.3"/>
</dbReference>
<dbReference type="RefSeq" id="NP_001014564.1">
    <property type="nucleotide sequence ID" value="NM_001014564.3"/>
</dbReference>
<dbReference type="RefSeq" id="NP_001189051.1">
    <property type="nucleotide sequence ID" value="NM_001202122.1"/>
</dbReference>
<dbReference type="RefSeq" id="NP_001246628.1">
    <property type="nucleotide sequence ID" value="NM_001259699.2"/>
</dbReference>
<dbReference type="RefSeq" id="NP_001246629.1">
    <property type="nucleotide sequence ID" value="NM_001259700.2"/>
</dbReference>
<dbReference type="RefSeq" id="NP_524934.2">
    <property type="nucleotide sequence ID" value="NM_080195.4"/>
</dbReference>
<dbReference type="SMR" id="P00528"/>
<dbReference type="BioGRID" id="71867">
    <property type="interactions" value="70"/>
</dbReference>
<dbReference type="DIP" id="DIP-17438N"/>
<dbReference type="FunCoup" id="P00528">
    <property type="interactions" value="237"/>
</dbReference>
<dbReference type="IntAct" id="P00528">
    <property type="interactions" value="12"/>
</dbReference>
<dbReference type="STRING" id="7227.FBpp0310444"/>
<dbReference type="iPTMnet" id="P00528"/>
<dbReference type="PaxDb" id="7227-FBpp0293527"/>
<dbReference type="DNASU" id="48973"/>
<dbReference type="EnsemblMetazoa" id="FBtr0073321">
    <property type="protein sequence ID" value="FBpp0073177"/>
    <property type="gene ID" value="FBgn0262733"/>
</dbReference>
<dbReference type="EnsemblMetazoa" id="FBtr0100504">
    <property type="protein sequence ID" value="FBpp0099944"/>
    <property type="gene ID" value="FBgn0262733"/>
</dbReference>
<dbReference type="EnsemblMetazoa" id="FBtr0100505">
    <property type="protein sequence ID" value="FBpp0099946"/>
    <property type="gene ID" value="FBgn0262733"/>
</dbReference>
<dbReference type="EnsemblMetazoa" id="FBtr0100507">
    <property type="protein sequence ID" value="FBpp0099947"/>
    <property type="gene ID" value="FBgn0262733"/>
</dbReference>
<dbReference type="EnsemblMetazoa" id="FBtr0100508">
    <property type="protein sequence ID" value="FBpp0099948"/>
    <property type="gene ID" value="FBgn0262733"/>
</dbReference>
<dbReference type="EnsemblMetazoa" id="FBtr0302594">
    <property type="protein sequence ID" value="FBpp0291750"/>
    <property type="gene ID" value="FBgn0262733"/>
</dbReference>
<dbReference type="EnsemblMetazoa" id="FBtr0304989">
    <property type="protein sequence ID" value="FBpp0293526"/>
    <property type="gene ID" value="FBgn0262733"/>
</dbReference>
<dbReference type="EnsemblMetazoa" id="FBtr0304990">
    <property type="protein sequence ID" value="FBpp0293527"/>
    <property type="gene ID" value="FBgn0262733"/>
</dbReference>
<dbReference type="GeneID" id="48973"/>
<dbReference type="KEGG" id="dme:Dmel_CG7524"/>
<dbReference type="AGR" id="FB:FBgn0262733"/>
<dbReference type="CTD" id="48973"/>
<dbReference type="FlyBase" id="FBgn0262733">
    <property type="gene designation" value="Src64B"/>
</dbReference>
<dbReference type="VEuPathDB" id="VectorBase:FBgn0262733"/>
<dbReference type="eggNOG" id="KOG0197">
    <property type="taxonomic scope" value="Eukaryota"/>
</dbReference>
<dbReference type="GeneTree" id="ENSGT00940000164033"/>
<dbReference type="InParanoid" id="P00528"/>
<dbReference type="OrthoDB" id="28230at2759"/>
<dbReference type="PhylomeDB" id="P00528"/>
<dbReference type="BRENDA" id="2.7.10.2">
    <property type="organism ID" value="1994"/>
</dbReference>
<dbReference type="Reactome" id="R-DME-1227986">
    <property type="pathway name" value="Signaling by ERBB2"/>
</dbReference>
<dbReference type="Reactome" id="R-DME-1251985">
    <property type="pathway name" value="Nuclear signaling by ERBB4"/>
</dbReference>
<dbReference type="Reactome" id="R-DME-1253288">
    <property type="pathway name" value="Downregulation of ERBB4 signaling"/>
</dbReference>
<dbReference type="Reactome" id="R-DME-1257604">
    <property type="pathway name" value="PIP3 activates AKT signaling"/>
</dbReference>
<dbReference type="Reactome" id="R-DME-1295596">
    <property type="pathway name" value="Spry regulation of FGF signaling"/>
</dbReference>
<dbReference type="Reactome" id="R-DME-1433557">
    <property type="pathway name" value="Signaling by SCF-KIT"/>
</dbReference>
<dbReference type="Reactome" id="R-DME-1433559">
    <property type="pathway name" value="Regulation of KIT signaling"/>
</dbReference>
<dbReference type="Reactome" id="R-DME-177929">
    <property type="pathway name" value="Signaling by EGFR"/>
</dbReference>
<dbReference type="Reactome" id="R-DME-180292">
    <property type="pathway name" value="GAB1 signalosome"/>
</dbReference>
<dbReference type="Reactome" id="R-DME-186763">
    <property type="pathway name" value="Downstream signal transduction"/>
</dbReference>
<dbReference type="Reactome" id="R-DME-2454202">
    <property type="pathway name" value="Fc epsilon receptor (FCERI) signaling"/>
</dbReference>
<dbReference type="Reactome" id="R-DME-354192">
    <property type="pathway name" value="Integrin signaling"/>
</dbReference>
<dbReference type="Reactome" id="R-DME-373753">
    <property type="pathway name" value="Nephrin family interactions"/>
</dbReference>
<dbReference type="Reactome" id="R-DME-375165">
    <property type="pathway name" value="NCAM signaling for neurite out-growth"/>
</dbReference>
<dbReference type="Reactome" id="R-DME-3928662">
    <property type="pathway name" value="EPHB-mediated forward signaling"/>
</dbReference>
<dbReference type="Reactome" id="R-DME-3928663">
    <property type="pathway name" value="EPHA-mediated growth cone collapse"/>
</dbReference>
<dbReference type="Reactome" id="R-DME-3928664">
    <property type="pathway name" value="Ephrin signaling"/>
</dbReference>
<dbReference type="Reactome" id="R-DME-3928665">
    <property type="pathway name" value="EPH-ephrin mediated repulsion of cells"/>
</dbReference>
<dbReference type="Reactome" id="R-DME-399954">
    <property type="pathway name" value="Sema3A PAK dependent Axon repulsion"/>
</dbReference>
<dbReference type="Reactome" id="R-DME-399955">
    <property type="pathway name" value="SEMA3A-Plexin repulsion signaling by inhibiting Integrin adhesion"/>
</dbReference>
<dbReference type="Reactome" id="R-DME-399956">
    <property type="pathway name" value="CRMPs in Sema3A signaling"/>
</dbReference>
<dbReference type="Reactome" id="R-DME-418592">
    <property type="pathway name" value="ADP signalling through P2Y purinoceptor 1"/>
</dbReference>
<dbReference type="Reactome" id="R-DME-418594">
    <property type="pathway name" value="G alpha (i) signalling events"/>
</dbReference>
<dbReference type="Reactome" id="R-DME-418885">
    <property type="pathway name" value="DCC mediated attractive signaling"/>
</dbReference>
<dbReference type="Reactome" id="R-DME-430116">
    <property type="pathway name" value="GP1b-IX-V activation signalling"/>
</dbReference>
<dbReference type="Reactome" id="R-DME-432142">
    <property type="pathway name" value="Platelet sensitization by LDL"/>
</dbReference>
<dbReference type="Reactome" id="R-DME-4420097">
    <property type="pathway name" value="VEGFA-VEGFR2 Pathway"/>
</dbReference>
<dbReference type="Reactome" id="R-DME-456926">
    <property type="pathway name" value="Thrombin signalling through proteinase activated receptors (PARs)"/>
</dbReference>
<dbReference type="Reactome" id="R-DME-5621575">
    <property type="pathway name" value="CD209 (DC-SIGN) signaling"/>
</dbReference>
<dbReference type="Reactome" id="R-DME-5663220">
    <property type="pathway name" value="RHO GTPases Activate Formins"/>
</dbReference>
<dbReference type="Reactome" id="R-DME-5673000">
    <property type="pathway name" value="RAF activation"/>
</dbReference>
<dbReference type="Reactome" id="R-DME-5673001">
    <property type="pathway name" value="RAF/MAP kinase cascade"/>
</dbReference>
<dbReference type="Reactome" id="R-DME-5674135">
    <property type="pathway name" value="MAP2K and MAPK activation"/>
</dbReference>
<dbReference type="Reactome" id="R-DME-6798695">
    <property type="pathway name" value="Neutrophil degranulation"/>
</dbReference>
<dbReference type="Reactome" id="R-DME-6811558">
    <property type="pathway name" value="PI5P, PP2A and IER3 Regulate PI3K/AKT Signaling"/>
</dbReference>
<dbReference type="Reactome" id="R-DME-69231">
    <property type="pathway name" value="Cyclin D associated events in G1"/>
</dbReference>
<dbReference type="Reactome" id="R-DME-8934903">
    <property type="pathway name" value="Receptor Mediated Mitophagy"/>
</dbReference>
<dbReference type="Reactome" id="R-DME-8941858">
    <property type="pathway name" value="Regulation of RUNX3 expression and activity"/>
</dbReference>
<dbReference type="Reactome" id="R-DME-9006335">
    <property type="pathway name" value="Signaling by Erythropoietin"/>
</dbReference>
<dbReference type="Reactome" id="R-DME-9009391">
    <property type="pathway name" value="Extra-nuclear estrogen signaling"/>
</dbReference>
<dbReference type="Reactome" id="R-DME-9013407">
    <property type="pathway name" value="RHOH GTPase cycle"/>
</dbReference>
<dbReference type="Reactome" id="R-DME-9027276">
    <property type="pathway name" value="Erythropoietin activates Phosphoinositide-3-kinase (PI3K)"/>
</dbReference>
<dbReference type="Reactome" id="R-DME-9027284">
    <property type="pathway name" value="Erythropoietin activates RAS"/>
</dbReference>
<dbReference type="Reactome" id="R-DME-912631">
    <property type="pathway name" value="Regulation of signaling by CBL"/>
</dbReference>
<dbReference type="Reactome" id="R-DME-9674555">
    <property type="pathway name" value="Signaling by CSF3 (G-CSF)"/>
</dbReference>
<dbReference type="Reactome" id="R-DME-9705462">
    <property type="pathway name" value="Inactivation of CSF3 (G-CSF) signaling"/>
</dbReference>
<dbReference type="SignaLink" id="P00528"/>
<dbReference type="BioGRID-ORCS" id="48973">
    <property type="hits" value="0 hits in 3 CRISPR screens"/>
</dbReference>
<dbReference type="ChiTaRS" id="Src64B">
    <property type="organism name" value="fly"/>
</dbReference>
<dbReference type="GenomeRNAi" id="48973"/>
<dbReference type="PRO" id="PR:P00528"/>
<dbReference type="Proteomes" id="UP000000803">
    <property type="component" value="Chromosome 3L"/>
</dbReference>
<dbReference type="Bgee" id="FBgn0262733">
    <property type="expression patterns" value="Expressed in spermatogonium in testis and 231 other cell types or tissues"/>
</dbReference>
<dbReference type="ExpressionAtlas" id="P00528">
    <property type="expression patterns" value="baseline and differential"/>
</dbReference>
<dbReference type="GO" id="GO:0005829">
    <property type="term" value="C:cytosol"/>
    <property type="evidence" value="ECO:0007005"/>
    <property type="project" value="FlyBase"/>
</dbReference>
<dbReference type="GO" id="GO:0045172">
    <property type="term" value="C:germline ring canal"/>
    <property type="evidence" value="ECO:0000314"/>
    <property type="project" value="FlyBase"/>
</dbReference>
<dbReference type="GO" id="GO:0005917">
    <property type="term" value="C:nephrocyte diaphragm"/>
    <property type="evidence" value="ECO:0000314"/>
    <property type="project" value="FlyBase"/>
</dbReference>
<dbReference type="GO" id="GO:0005886">
    <property type="term" value="C:plasma membrane"/>
    <property type="evidence" value="ECO:0007005"/>
    <property type="project" value="FlyBase"/>
</dbReference>
<dbReference type="GO" id="GO:0005524">
    <property type="term" value="F:ATP binding"/>
    <property type="evidence" value="ECO:0007669"/>
    <property type="project" value="UniProtKB-KW"/>
</dbReference>
<dbReference type="GO" id="GO:0004715">
    <property type="term" value="F:non-membrane spanning protein tyrosine kinase activity"/>
    <property type="evidence" value="ECO:0000314"/>
    <property type="project" value="FlyBase"/>
</dbReference>
<dbReference type="GO" id="GO:0005102">
    <property type="term" value="F:signaling receptor binding"/>
    <property type="evidence" value="ECO:0000353"/>
    <property type="project" value="FlyBase"/>
</dbReference>
<dbReference type="GO" id="GO:0030036">
    <property type="term" value="P:actin cytoskeleton organization"/>
    <property type="evidence" value="ECO:0000315"/>
    <property type="project" value="FlyBase"/>
</dbReference>
<dbReference type="GO" id="GO:0034332">
    <property type="term" value="P:adherens junction organization"/>
    <property type="evidence" value="ECO:0000315"/>
    <property type="project" value="FlyBase"/>
</dbReference>
<dbReference type="GO" id="GO:0007411">
    <property type="term" value="P:axon guidance"/>
    <property type="evidence" value="ECO:0000315"/>
    <property type="project" value="FlyBase"/>
</dbReference>
<dbReference type="GO" id="GO:0030154">
    <property type="term" value="P:cell differentiation"/>
    <property type="evidence" value="ECO:0000318"/>
    <property type="project" value="GO_Central"/>
</dbReference>
<dbReference type="GO" id="GO:0007169">
    <property type="term" value="P:cell surface receptor protein tyrosine kinase signaling pathway"/>
    <property type="evidence" value="ECO:0000318"/>
    <property type="project" value="GO_Central"/>
</dbReference>
<dbReference type="GO" id="GO:0007349">
    <property type="term" value="P:cellularization"/>
    <property type="evidence" value="ECO:0000315"/>
    <property type="project" value="FlyBase"/>
</dbReference>
<dbReference type="GO" id="GO:0090136">
    <property type="term" value="P:epithelial cell-cell adhesion"/>
    <property type="evidence" value="ECO:0000315"/>
    <property type="project" value="FlyBase"/>
</dbReference>
<dbReference type="GO" id="GO:0007301">
    <property type="term" value="P:female germline ring canal formation"/>
    <property type="evidence" value="ECO:0000315"/>
    <property type="project" value="FlyBase"/>
</dbReference>
<dbReference type="GO" id="GO:0008302">
    <property type="term" value="P:female germline ring canal formation, actin assembly"/>
    <property type="evidence" value="ECO:0000315"/>
    <property type="project" value="FlyBase"/>
</dbReference>
<dbReference type="GO" id="GO:0008335">
    <property type="term" value="P:female germline ring canal stabilization"/>
    <property type="evidence" value="ECO:0000315"/>
    <property type="project" value="FlyBase"/>
</dbReference>
<dbReference type="GO" id="GO:0036058">
    <property type="term" value="P:filtration diaphragm assembly"/>
    <property type="evidence" value="ECO:0000315"/>
    <property type="project" value="FlyBase"/>
</dbReference>
<dbReference type="GO" id="GO:0007293">
    <property type="term" value="P:germarium-derived egg chamber formation"/>
    <property type="evidence" value="ECO:0000315"/>
    <property type="project" value="FlyBase"/>
</dbReference>
<dbReference type="GO" id="GO:0030708">
    <property type="term" value="P:germarium-derived female germ-line cyst encapsulation"/>
    <property type="evidence" value="ECO:0000315"/>
    <property type="project" value="FlyBase"/>
</dbReference>
<dbReference type="GO" id="GO:0007616">
    <property type="term" value="P:long-term memory"/>
    <property type="evidence" value="ECO:0000315"/>
    <property type="project" value="FlyBase"/>
</dbReference>
<dbReference type="GO" id="GO:0016319">
    <property type="term" value="P:mushroom body development"/>
    <property type="evidence" value="ECO:0000315"/>
    <property type="project" value="FlyBase"/>
</dbReference>
<dbReference type="GO" id="GO:0035331">
    <property type="term" value="P:negative regulation of hippo signaling"/>
    <property type="evidence" value="ECO:0000316"/>
    <property type="project" value="FlyBase"/>
</dbReference>
<dbReference type="GO" id="GO:0045886">
    <property type="term" value="P:negative regulation of synaptic assembly at neuromuscular junction"/>
    <property type="evidence" value="ECO:0000316"/>
    <property type="project" value="FlyBase"/>
</dbReference>
<dbReference type="GO" id="GO:0036059">
    <property type="term" value="P:nephrocyte diaphragm assembly"/>
    <property type="evidence" value="ECO:0000304"/>
    <property type="project" value="FlyBase"/>
</dbReference>
<dbReference type="GO" id="GO:0030717">
    <property type="term" value="P:oocyte karyosome formation"/>
    <property type="evidence" value="ECO:0000315"/>
    <property type="project" value="FlyBase"/>
</dbReference>
<dbReference type="GO" id="GO:0048477">
    <property type="term" value="P:oogenesis"/>
    <property type="evidence" value="ECO:0000315"/>
    <property type="project" value="FlyBase"/>
</dbReference>
<dbReference type="GO" id="GO:0007424">
    <property type="term" value="P:open tracheal system development"/>
    <property type="evidence" value="ECO:0000315"/>
    <property type="project" value="FlyBase"/>
</dbReference>
<dbReference type="GO" id="GO:0030723">
    <property type="term" value="P:ovarian fusome organization"/>
    <property type="evidence" value="ECO:0000315"/>
    <property type="project" value="FlyBase"/>
</dbReference>
<dbReference type="GO" id="GO:0007300">
    <property type="term" value="P:ovarian nurse cell to oocyte transport"/>
    <property type="evidence" value="ECO:0000315"/>
    <property type="project" value="FlyBase"/>
</dbReference>
<dbReference type="GO" id="GO:0030046">
    <property type="term" value="P:parallel actin filament bundle assembly"/>
    <property type="evidence" value="ECO:0000315"/>
    <property type="project" value="FlyBase"/>
</dbReference>
<dbReference type="GO" id="GO:0045742">
    <property type="term" value="P:positive regulation of epidermal growth factor receptor signaling pathway"/>
    <property type="evidence" value="ECO:0000316"/>
    <property type="project" value="FlyBase"/>
</dbReference>
<dbReference type="GO" id="GO:0045743">
    <property type="term" value="P:positive regulation of fibroblast growth factor receptor signaling pathway"/>
    <property type="evidence" value="ECO:0000315"/>
    <property type="project" value="FlyBase"/>
</dbReference>
<dbReference type="GO" id="GO:0045874">
    <property type="term" value="P:positive regulation of sevenless signaling pathway"/>
    <property type="evidence" value="ECO:0000316"/>
    <property type="project" value="FlyBase"/>
</dbReference>
<dbReference type="GO" id="GO:0120176">
    <property type="term" value="P:positive regulation of torso signaling pathway"/>
    <property type="evidence" value="ECO:0000316"/>
    <property type="project" value="FlyBase"/>
</dbReference>
<dbReference type="GO" id="GO:0008064">
    <property type="term" value="P:regulation of actin polymerization or depolymerization"/>
    <property type="evidence" value="ECO:0000315"/>
    <property type="project" value="FlyBase"/>
</dbReference>
<dbReference type="GO" id="GO:0048167">
    <property type="term" value="P:regulation of synaptic plasticity"/>
    <property type="evidence" value="ECO:0000316"/>
    <property type="project" value="FlyBase"/>
</dbReference>
<dbReference type="GO" id="GO:0007435">
    <property type="term" value="P:salivary gland morphogenesis"/>
    <property type="evidence" value="ECO:0000315"/>
    <property type="project" value="FlyBase"/>
</dbReference>
<dbReference type="CDD" id="cd05034">
    <property type="entry name" value="PTKc_Src_like"/>
    <property type="match status" value="1"/>
</dbReference>
<dbReference type="CDD" id="cd09933">
    <property type="entry name" value="SH2_Src_family"/>
    <property type="match status" value="1"/>
</dbReference>
<dbReference type="CDD" id="cd11845">
    <property type="entry name" value="SH3_Src_like"/>
    <property type="match status" value="1"/>
</dbReference>
<dbReference type="FunFam" id="1.10.510.10:FF:000399">
    <property type="entry name" value="Tyrosine-protein kinase"/>
    <property type="match status" value="1"/>
</dbReference>
<dbReference type="FunFam" id="2.30.30.40:FF:000253">
    <property type="entry name" value="Tyrosine-protein kinase"/>
    <property type="match status" value="1"/>
</dbReference>
<dbReference type="FunFam" id="3.30.200.20:FF:000053">
    <property type="entry name" value="Tyrosine-protein kinase"/>
    <property type="match status" value="1"/>
</dbReference>
<dbReference type="FunFam" id="3.30.505.10:FF:000088">
    <property type="entry name" value="Tyrosine-protein kinase"/>
    <property type="match status" value="1"/>
</dbReference>
<dbReference type="Gene3D" id="3.30.200.20">
    <property type="entry name" value="Phosphorylase Kinase, domain 1"/>
    <property type="match status" value="1"/>
</dbReference>
<dbReference type="Gene3D" id="3.30.505.10">
    <property type="entry name" value="SH2 domain"/>
    <property type="match status" value="1"/>
</dbReference>
<dbReference type="Gene3D" id="2.30.30.40">
    <property type="entry name" value="SH3 Domains"/>
    <property type="match status" value="1"/>
</dbReference>
<dbReference type="Gene3D" id="1.10.510.10">
    <property type="entry name" value="Transferase(Phosphotransferase) domain 1"/>
    <property type="match status" value="1"/>
</dbReference>
<dbReference type="InterPro" id="IPR011009">
    <property type="entry name" value="Kinase-like_dom_sf"/>
</dbReference>
<dbReference type="InterPro" id="IPR050198">
    <property type="entry name" value="Non-receptor_tyrosine_kinases"/>
</dbReference>
<dbReference type="InterPro" id="IPR000719">
    <property type="entry name" value="Prot_kinase_dom"/>
</dbReference>
<dbReference type="InterPro" id="IPR017441">
    <property type="entry name" value="Protein_kinase_ATP_BS"/>
</dbReference>
<dbReference type="InterPro" id="IPR001245">
    <property type="entry name" value="Ser-Thr/Tyr_kinase_cat_dom"/>
</dbReference>
<dbReference type="InterPro" id="IPR000980">
    <property type="entry name" value="SH2"/>
</dbReference>
<dbReference type="InterPro" id="IPR036860">
    <property type="entry name" value="SH2_dom_sf"/>
</dbReference>
<dbReference type="InterPro" id="IPR036028">
    <property type="entry name" value="SH3-like_dom_sf"/>
</dbReference>
<dbReference type="InterPro" id="IPR001452">
    <property type="entry name" value="SH3_domain"/>
</dbReference>
<dbReference type="InterPro" id="IPR008266">
    <property type="entry name" value="Tyr_kinase_AS"/>
</dbReference>
<dbReference type="InterPro" id="IPR020635">
    <property type="entry name" value="Tyr_kinase_cat_dom"/>
</dbReference>
<dbReference type="PANTHER" id="PTHR24418">
    <property type="entry name" value="TYROSINE-PROTEIN KINASE"/>
    <property type="match status" value="1"/>
</dbReference>
<dbReference type="Pfam" id="PF07714">
    <property type="entry name" value="PK_Tyr_Ser-Thr"/>
    <property type="match status" value="1"/>
</dbReference>
<dbReference type="Pfam" id="PF00017">
    <property type="entry name" value="SH2"/>
    <property type="match status" value="1"/>
</dbReference>
<dbReference type="Pfam" id="PF00018">
    <property type="entry name" value="SH3_1"/>
    <property type="match status" value="1"/>
</dbReference>
<dbReference type="PRINTS" id="PR00401">
    <property type="entry name" value="SH2DOMAIN"/>
</dbReference>
<dbReference type="PRINTS" id="PR00452">
    <property type="entry name" value="SH3DOMAIN"/>
</dbReference>
<dbReference type="PRINTS" id="PR00109">
    <property type="entry name" value="TYRKINASE"/>
</dbReference>
<dbReference type="SMART" id="SM00252">
    <property type="entry name" value="SH2"/>
    <property type="match status" value="1"/>
</dbReference>
<dbReference type="SMART" id="SM00326">
    <property type="entry name" value="SH3"/>
    <property type="match status" value="1"/>
</dbReference>
<dbReference type="SMART" id="SM00219">
    <property type="entry name" value="TyrKc"/>
    <property type="match status" value="1"/>
</dbReference>
<dbReference type="SUPFAM" id="SSF56112">
    <property type="entry name" value="Protein kinase-like (PK-like)"/>
    <property type="match status" value="1"/>
</dbReference>
<dbReference type="SUPFAM" id="SSF55550">
    <property type="entry name" value="SH2 domain"/>
    <property type="match status" value="1"/>
</dbReference>
<dbReference type="SUPFAM" id="SSF50044">
    <property type="entry name" value="SH3-domain"/>
    <property type="match status" value="1"/>
</dbReference>
<dbReference type="PROSITE" id="PS00107">
    <property type="entry name" value="PROTEIN_KINASE_ATP"/>
    <property type="match status" value="1"/>
</dbReference>
<dbReference type="PROSITE" id="PS50011">
    <property type="entry name" value="PROTEIN_KINASE_DOM"/>
    <property type="match status" value="1"/>
</dbReference>
<dbReference type="PROSITE" id="PS00109">
    <property type="entry name" value="PROTEIN_KINASE_TYR"/>
    <property type="match status" value="1"/>
</dbReference>
<dbReference type="PROSITE" id="PS50001">
    <property type="entry name" value="SH2"/>
    <property type="match status" value="1"/>
</dbReference>
<dbReference type="PROSITE" id="PS50002">
    <property type="entry name" value="SH3"/>
    <property type="match status" value="1"/>
</dbReference>
<name>SRC64_DROME</name>
<evidence type="ECO:0000250" key="1"/>
<evidence type="ECO:0000255" key="2">
    <source>
        <dbReference type="PROSITE-ProRule" id="PRU00159"/>
    </source>
</evidence>
<evidence type="ECO:0000255" key="3">
    <source>
        <dbReference type="PROSITE-ProRule" id="PRU00191"/>
    </source>
</evidence>
<evidence type="ECO:0000255" key="4">
    <source>
        <dbReference type="PROSITE-ProRule" id="PRU00192"/>
    </source>
</evidence>
<evidence type="ECO:0000255" key="5">
    <source>
        <dbReference type="PROSITE-ProRule" id="PRU10028"/>
    </source>
</evidence>
<evidence type="ECO:0000269" key="6">
    <source>
    </source>
</evidence>
<evidence type="ECO:0000269" key="7">
    <source>
    </source>
</evidence>
<evidence type="ECO:0000269" key="8">
    <source>
    </source>
</evidence>
<evidence type="ECO:0000305" key="9"/>
<protein>
    <recommendedName>
        <fullName>Tyrosine-protein kinase Src64B</fullName>
        <shortName>Dsrc64</shortName>
        <ecNumber>2.7.10.2</ecNumber>
    </recommendedName>
</protein>
<proteinExistence type="evidence at protein level"/>
<accession>P00528</accession>
<accession>A4V1H7</accession>
<accession>O18372</accession>
<accession>Q9VZA2</accession>
<reference key="1">
    <citation type="journal article" date="1985" name="Cell">
        <title>The nucleotide sequence and the tissue-specific expression of Drosophila c-src.</title>
        <authorList>
            <person name="Simon M.A."/>
            <person name="Drees B."/>
            <person name="Kornberg T."/>
            <person name="Bishop J.M."/>
        </authorList>
    </citation>
    <scope>NUCLEOTIDE SEQUENCE [MRNA]</scope>
    <scope>FUNCTION</scope>
    <scope>TISSUE SPECIFICITY</scope>
    <scope>DEVELOPMENTAL STAGE</scope>
</reference>
<reference key="2">
    <citation type="journal article" date="2000" name="Science">
        <title>The genome sequence of Drosophila melanogaster.</title>
        <authorList>
            <person name="Adams M.D."/>
            <person name="Celniker S.E."/>
            <person name="Holt R.A."/>
            <person name="Evans C.A."/>
            <person name="Gocayne J.D."/>
            <person name="Amanatides P.G."/>
            <person name="Scherer S.E."/>
            <person name="Li P.W."/>
            <person name="Hoskins R.A."/>
            <person name="Galle R.F."/>
            <person name="George R.A."/>
            <person name="Lewis S.E."/>
            <person name="Richards S."/>
            <person name="Ashburner M."/>
            <person name="Henderson S.N."/>
            <person name="Sutton G.G."/>
            <person name="Wortman J.R."/>
            <person name="Yandell M.D."/>
            <person name="Zhang Q."/>
            <person name="Chen L.X."/>
            <person name="Brandon R.C."/>
            <person name="Rogers Y.-H.C."/>
            <person name="Blazej R.G."/>
            <person name="Champe M."/>
            <person name="Pfeiffer B.D."/>
            <person name="Wan K.H."/>
            <person name="Doyle C."/>
            <person name="Baxter E.G."/>
            <person name="Helt G."/>
            <person name="Nelson C.R."/>
            <person name="Miklos G.L.G."/>
            <person name="Abril J.F."/>
            <person name="Agbayani A."/>
            <person name="An H.-J."/>
            <person name="Andrews-Pfannkoch C."/>
            <person name="Baldwin D."/>
            <person name="Ballew R.M."/>
            <person name="Basu A."/>
            <person name="Baxendale J."/>
            <person name="Bayraktaroglu L."/>
            <person name="Beasley E.M."/>
            <person name="Beeson K.Y."/>
            <person name="Benos P.V."/>
            <person name="Berman B.P."/>
            <person name="Bhandari D."/>
            <person name="Bolshakov S."/>
            <person name="Borkova D."/>
            <person name="Botchan M.R."/>
            <person name="Bouck J."/>
            <person name="Brokstein P."/>
            <person name="Brottier P."/>
            <person name="Burtis K.C."/>
            <person name="Busam D.A."/>
            <person name="Butler H."/>
            <person name="Cadieu E."/>
            <person name="Center A."/>
            <person name="Chandra I."/>
            <person name="Cherry J.M."/>
            <person name="Cawley S."/>
            <person name="Dahlke C."/>
            <person name="Davenport L.B."/>
            <person name="Davies P."/>
            <person name="de Pablos B."/>
            <person name="Delcher A."/>
            <person name="Deng Z."/>
            <person name="Mays A.D."/>
            <person name="Dew I."/>
            <person name="Dietz S.M."/>
            <person name="Dodson K."/>
            <person name="Doup L.E."/>
            <person name="Downes M."/>
            <person name="Dugan-Rocha S."/>
            <person name="Dunkov B.C."/>
            <person name="Dunn P."/>
            <person name="Durbin K.J."/>
            <person name="Evangelista C.C."/>
            <person name="Ferraz C."/>
            <person name="Ferriera S."/>
            <person name="Fleischmann W."/>
            <person name="Fosler C."/>
            <person name="Gabrielian A.E."/>
            <person name="Garg N.S."/>
            <person name="Gelbart W.M."/>
            <person name="Glasser K."/>
            <person name="Glodek A."/>
            <person name="Gong F."/>
            <person name="Gorrell J.H."/>
            <person name="Gu Z."/>
            <person name="Guan P."/>
            <person name="Harris M."/>
            <person name="Harris N.L."/>
            <person name="Harvey D.A."/>
            <person name="Heiman T.J."/>
            <person name="Hernandez J.R."/>
            <person name="Houck J."/>
            <person name="Hostin D."/>
            <person name="Houston K.A."/>
            <person name="Howland T.J."/>
            <person name="Wei M.-H."/>
            <person name="Ibegwam C."/>
            <person name="Jalali M."/>
            <person name="Kalush F."/>
            <person name="Karpen G.H."/>
            <person name="Ke Z."/>
            <person name="Kennison J.A."/>
            <person name="Ketchum K.A."/>
            <person name="Kimmel B.E."/>
            <person name="Kodira C.D."/>
            <person name="Kraft C.L."/>
            <person name="Kravitz S."/>
            <person name="Kulp D."/>
            <person name="Lai Z."/>
            <person name="Lasko P."/>
            <person name="Lei Y."/>
            <person name="Levitsky A.A."/>
            <person name="Li J.H."/>
            <person name="Li Z."/>
            <person name="Liang Y."/>
            <person name="Lin X."/>
            <person name="Liu X."/>
            <person name="Mattei B."/>
            <person name="McIntosh T.C."/>
            <person name="McLeod M.P."/>
            <person name="McPherson D."/>
            <person name="Merkulov G."/>
            <person name="Milshina N.V."/>
            <person name="Mobarry C."/>
            <person name="Morris J."/>
            <person name="Moshrefi A."/>
            <person name="Mount S.M."/>
            <person name="Moy M."/>
            <person name="Murphy B."/>
            <person name="Murphy L."/>
            <person name="Muzny D.M."/>
            <person name="Nelson D.L."/>
            <person name="Nelson D.R."/>
            <person name="Nelson K.A."/>
            <person name="Nixon K."/>
            <person name="Nusskern D.R."/>
            <person name="Pacleb J.M."/>
            <person name="Palazzolo M."/>
            <person name="Pittman G.S."/>
            <person name="Pan S."/>
            <person name="Pollard J."/>
            <person name="Puri V."/>
            <person name="Reese M.G."/>
            <person name="Reinert K."/>
            <person name="Remington K."/>
            <person name="Saunders R.D.C."/>
            <person name="Scheeler F."/>
            <person name="Shen H."/>
            <person name="Shue B.C."/>
            <person name="Siden-Kiamos I."/>
            <person name="Simpson M."/>
            <person name="Skupski M.P."/>
            <person name="Smith T.J."/>
            <person name="Spier E."/>
            <person name="Spradling A.C."/>
            <person name="Stapleton M."/>
            <person name="Strong R."/>
            <person name="Sun E."/>
            <person name="Svirskas R."/>
            <person name="Tector C."/>
            <person name="Turner R."/>
            <person name="Venter E."/>
            <person name="Wang A.H."/>
            <person name="Wang X."/>
            <person name="Wang Z.-Y."/>
            <person name="Wassarman D.A."/>
            <person name="Weinstock G.M."/>
            <person name="Weissenbach J."/>
            <person name="Williams S.M."/>
            <person name="Woodage T."/>
            <person name="Worley K.C."/>
            <person name="Wu D."/>
            <person name="Yang S."/>
            <person name="Yao Q.A."/>
            <person name="Ye J."/>
            <person name="Yeh R.-F."/>
            <person name="Zaveri J.S."/>
            <person name="Zhan M."/>
            <person name="Zhang G."/>
            <person name="Zhao Q."/>
            <person name="Zheng L."/>
            <person name="Zheng X.H."/>
            <person name="Zhong F.N."/>
            <person name="Zhong W."/>
            <person name="Zhou X."/>
            <person name="Zhu S.C."/>
            <person name="Zhu X."/>
            <person name="Smith H.O."/>
            <person name="Gibbs R.A."/>
            <person name="Myers E.W."/>
            <person name="Rubin G.M."/>
            <person name="Venter J.C."/>
        </authorList>
    </citation>
    <scope>NUCLEOTIDE SEQUENCE [LARGE SCALE GENOMIC DNA]</scope>
    <source>
        <strain>Berkeley</strain>
    </source>
</reference>
<reference key="3">
    <citation type="journal article" date="2002" name="Genome Biol.">
        <title>Annotation of the Drosophila melanogaster euchromatic genome: a systematic review.</title>
        <authorList>
            <person name="Misra S."/>
            <person name="Crosby M.A."/>
            <person name="Mungall C.J."/>
            <person name="Matthews B.B."/>
            <person name="Campbell K.S."/>
            <person name="Hradecky P."/>
            <person name="Huang Y."/>
            <person name="Kaminker J.S."/>
            <person name="Millburn G.H."/>
            <person name="Prochnik S.E."/>
            <person name="Smith C.D."/>
            <person name="Tupy J.L."/>
            <person name="Whitfield E.J."/>
            <person name="Bayraktaroglu L."/>
            <person name="Berman B.P."/>
            <person name="Bettencourt B.R."/>
            <person name="Celniker S.E."/>
            <person name="de Grey A.D.N.J."/>
            <person name="Drysdale R.A."/>
            <person name="Harris N.L."/>
            <person name="Richter J."/>
            <person name="Russo S."/>
            <person name="Schroeder A.J."/>
            <person name="Shu S.Q."/>
            <person name="Stapleton M."/>
            <person name="Yamada C."/>
            <person name="Ashburner M."/>
            <person name="Gelbart W.M."/>
            <person name="Rubin G.M."/>
            <person name="Lewis S.E."/>
        </authorList>
    </citation>
    <scope>GENOME REANNOTATION</scope>
    <source>
        <strain>Berkeley</strain>
    </source>
</reference>
<reference key="4">
    <citation type="journal article" date="2002" name="Genome Biol.">
        <title>A Drosophila full-length cDNA resource.</title>
        <authorList>
            <person name="Stapleton M."/>
            <person name="Carlson J.W."/>
            <person name="Brokstein P."/>
            <person name="Yu C."/>
            <person name="Champe M."/>
            <person name="George R.A."/>
            <person name="Guarin H."/>
            <person name="Kronmiller B."/>
            <person name="Pacleb J.M."/>
            <person name="Park S."/>
            <person name="Wan K.H."/>
            <person name="Rubin G.M."/>
            <person name="Celniker S.E."/>
        </authorList>
    </citation>
    <scope>NUCLEOTIDE SEQUENCE [LARGE SCALE MRNA]</scope>
    <source>
        <strain>Berkeley</strain>
        <tissue>Embryo</tissue>
    </source>
</reference>
<reference key="5">
    <citation type="journal article" date="1983" name="Cell">
        <title>Nucleotide sequences of the Drosophila src and abl homologs: conservation and variability in the src family oncogenes.</title>
        <authorList>
            <person name="Hoffmann F.M."/>
            <person name="Fresco L.D."/>
            <person name="Hoffman-Falk H."/>
            <person name="Shilo B.-Z."/>
        </authorList>
    </citation>
    <scope>NUCLEOTIDE SEQUENCE [GENOMIC DNA] OF 249-552</scope>
</reference>
<reference key="6">
    <citation type="journal article" date="1998" name="Biochem. Biophys. Res. Commun.">
        <title>Sampling the genomic pool of protein tyrosine kinase genes using the polymerase chain reaction with genomic DNA.</title>
        <authorList>
            <person name="Oates A.C."/>
            <person name="Wollberg P."/>
            <person name="Achen M.G."/>
            <person name="Wilks A.F."/>
        </authorList>
    </citation>
    <scope>NUCLEOTIDE SEQUENCE [GENOMIC DNA] OF 410-461</scope>
</reference>
<reference key="7">
    <citation type="journal article" date="2002" name="Biochem. J.">
        <title>Use of double-stranded RNA-mediated interference to determine the substrates of protein tyrosine kinases and phosphatases.</title>
        <authorList>
            <person name="Muda M."/>
            <person name="Worby C.A."/>
            <person name="Simonson-Leff N."/>
            <person name="Clemens J.C."/>
            <person name="Dixon J.E."/>
        </authorList>
    </citation>
    <scope>FUNCTION</scope>
</reference>
<reference key="8">
    <citation type="journal article" date="2019" name="Cell">
        <title>Amyloid-like Assembly Activates a Phosphatase in the Developing Drosophila Embryo.</title>
        <authorList>
            <person name="Nil Z."/>
            <person name="Hervas R."/>
            <person name="Gerbich T."/>
            <person name="Leal P."/>
            <person name="Yu Z."/>
            <person name="Saraf A."/>
            <person name="Sardiu M."/>
            <person name="Lange J.J."/>
            <person name="Yi K."/>
            <person name="Unruh J."/>
            <person name="Slaughter B."/>
            <person name="Si K."/>
        </authorList>
    </citation>
    <scope>INTERACTION WITH HZG</scope>
    <scope>PHOSPHORYLATION</scope>
</reference>
<organism>
    <name type="scientific">Drosophila melanogaster</name>
    <name type="common">Fruit fly</name>
    <dbReference type="NCBI Taxonomy" id="7227"/>
    <lineage>
        <taxon>Eukaryota</taxon>
        <taxon>Metazoa</taxon>
        <taxon>Ecdysozoa</taxon>
        <taxon>Arthropoda</taxon>
        <taxon>Hexapoda</taxon>
        <taxon>Insecta</taxon>
        <taxon>Pterygota</taxon>
        <taxon>Neoptera</taxon>
        <taxon>Endopterygota</taxon>
        <taxon>Diptera</taxon>
        <taxon>Brachycera</taxon>
        <taxon>Muscomorpha</taxon>
        <taxon>Ephydroidea</taxon>
        <taxon>Drosophilidae</taxon>
        <taxon>Drosophila</taxon>
        <taxon>Sophophora</taxon>
    </lineage>
</organism>
<keyword id="KW-0067">ATP-binding</keyword>
<keyword id="KW-0217">Developmental protein</keyword>
<keyword id="KW-0418">Kinase</keyword>
<keyword id="KW-0547">Nucleotide-binding</keyword>
<keyword id="KW-0597">Phosphoprotein</keyword>
<keyword id="KW-0656">Proto-oncogene</keyword>
<keyword id="KW-1185">Reference proteome</keyword>
<keyword id="KW-0727">SH2 domain</keyword>
<keyword id="KW-0728">SH3 domain</keyword>
<keyword id="KW-0808">Transferase</keyword>
<keyword id="KW-0829">Tyrosine-protein kinase</keyword>
<feature type="chain" id="PRO_0000088140" description="Tyrosine-protein kinase Src64B">
    <location>
        <begin position="1"/>
        <end position="552"/>
    </location>
</feature>
<feature type="domain" description="SH3" evidence="4">
    <location>
        <begin position="95"/>
        <end position="156"/>
    </location>
</feature>
<feature type="domain" description="SH2" evidence="3">
    <location>
        <begin position="162"/>
        <end position="259"/>
    </location>
</feature>
<feature type="domain" description="Protein kinase" evidence="2">
    <location>
        <begin position="284"/>
        <end position="537"/>
    </location>
</feature>
<feature type="active site" description="Proton acceptor" evidence="2 5">
    <location>
        <position position="404"/>
    </location>
</feature>
<feature type="binding site" evidence="2">
    <location>
        <begin position="290"/>
        <end position="298"/>
    </location>
    <ligand>
        <name>ATP</name>
        <dbReference type="ChEBI" id="CHEBI:30616"/>
    </ligand>
</feature>
<feature type="binding site" evidence="2">
    <location>
        <position position="312"/>
    </location>
    <ligand>
        <name>ATP</name>
        <dbReference type="ChEBI" id="CHEBI:30616"/>
    </ligand>
</feature>
<feature type="modified residue" description="Phosphotyrosine; by autocatalysis" evidence="1">
    <location>
        <position position="434"/>
    </location>
</feature>
<feature type="sequence conflict" description="In Ref. 1; AAA28913." evidence="9" ref="1">
    <original>A</original>
    <variation>S</variation>
    <location>
        <position position="102"/>
    </location>
</feature>
<feature type="sequence conflict" description="In Ref. 5; AAA28489." evidence="9" ref="5">
    <original>KPQPQMWDLGPE</original>
    <variation>ASLPQTAAPDVGFGPQ</variation>
    <location>
        <begin position="261"/>
        <end position="272"/>
    </location>
</feature>
<feature type="sequence conflict" description="In Ref. 5; AAA28489." evidence="9" ref="5">
    <original>LL</original>
    <variation>VV</variation>
    <location>
        <begin position="286"/>
        <end position="287"/>
    </location>
</feature>
<feature type="sequence conflict" description="In Ref. 5; AAA28489." evidence="9" ref="5">
    <original>L</original>
    <variation>V</variation>
    <location>
        <position position="290"/>
    </location>
</feature>
<feature type="sequence conflict" description="In Ref. 5; AAA28489." evidence="9" ref="5">
    <original>G</original>
    <variation>R</variation>
    <location>
        <position position="293"/>
    </location>
</feature>
<feature type="sequence conflict" description="In Ref. 5; AAA28489." evidence="9" ref="5">
    <original>E</original>
    <variation>A</variation>
    <location>
        <position position="316"/>
    </location>
</feature>
<feature type="sequence conflict" description="In Ref. 5; AAA28489." evidence="9" ref="5">
    <original>D</original>
    <variation>N</variation>
    <location>
        <position position="366"/>
    </location>
</feature>
<feature type="sequence conflict" description="In Ref. 5; AAA28489." evidence="9" ref="5">
    <original>G</original>
    <variation>D</variation>
    <location>
        <position position="373"/>
    </location>
</feature>
<feature type="sequence conflict" description="In Ref. 5; AAA28489." evidence="9" ref="5">
    <original>IA</original>
    <variation>MH</variation>
    <location>
        <begin position="384"/>
        <end position="385"/>
    </location>
</feature>
<feature type="sequence conflict" description="In Ref. 5; AAA28489." evidence="9" ref="5">
    <original>AS</original>
    <variation>TT</variation>
    <location>
        <begin position="389"/>
        <end position="390"/>
    </location>
</feature>
<feature type="sequence conflict" description="In Ref. 5; AAA28489." evidence="9" ref="5">
    <original>E</original>
    <variation>K</variation>
    <location>
        <position position="393"/>
    </location>
</feature>
<feature type="sequence conflict" description="In Ref. 5; AAA28489." evidence="9" ref="5">
    <original>L</original>
    <variation>V</variation>
    <location>
        <position position="400"/>
    </location>
</feature>
<feature type="sequence conflict" description="In Ref. 5; AAA28489." evidence="9" ref="5">
    <original>AA</original>
    <variation>TT</variation>
    <location>
        <begin position="406"/>
        <end position="407"/>
    </location>
</feature>
<feature type="sequence conflict" description="In Ref. 5; AAA28489." evidence="9" ref="5">
    <original>C</original>
    <variation>R</variation>
    <location>
        <position position="435"/>
    </location>
</feature>
<feature type="sequence conflict" description="In Ref. 6; CAA05754." evidence="9" ref="6">
    <original>K</original>
    <variation>E</variation>
    <location>
        <position position="460"/>
    </location>
</feature>
<feature type="sequence conflict" description="In Ref. 5; AAA28489." evidence="9" ref="5">
    <original>M</original>
    <variation>T</variation>
    <location>
        <position position="471"/>
    </location>
</feature>
<feature type="sequence conflict" description="In Ref. 5; AAA28489." evidence="9" ref="5">
    <original>M</original>
    <variation>L</variation>
    <location>
        <position position="484"/>
    </location>
</feature>
<feature type="sequence conflict" description="In Ref. 5; AAA28489." evidence="9" ref="5">
    <original>F</original>
    <variation>L</variation>
    <location>
        <position position="507"/>
    </location>
</feature>
<feature type="sequence conflict" description="In Ref. 5; AAA28489." evidence="9" ref="5">
    <original>F</original>
    <variation>L</variation>
    <location>
        <position position="536"/>
    </location>
</feature>
<comment type="function">
    <text evidence="6 7">Tyrosine-protein kinase that may play a role in the development of neural tissue and smooth muscle (PubMed:2996778). May contribute to tyrosine phosphorylation of Dscam1, a cell surface receptor involved in targeting of growing axons during eye morphogenesis (PubMed:12014990).</text>
</comment>
<comment type="catalytic activity">
    <reaction evidence="5">
        <text>L-tyrosyl-[protein] + ATP = O-phospho-L-tyrosyl-[protein] + ADP + H(+)</text>
        <dbReference type="Rhea" id="RHEA:10596"/>
        <dbReference type="Rhea" id="RHEA-COMP:10136"/>
        <dbReference type="Rhea" id="RHEA-COMP:20101"/>
        <dbReference type="ChEBI" id="CHEBI:15378"/>
        <dbReference type="ChEBI" id="CHEBI:30616"/>
        <dbReference type="ChEBI" id="CHEBI:46858"/>
        <dbReference type="ChEBI" id="CHEBI:61978"/>
        <dbReference type="ChEBI" id="CHEBI:456216"/>
        <dbReference type="EC" id="2.7.10.2"/>
    </reaction>
</comment>
<comment type="subunit">
    <text evidence="8">Interacts with hzg.</text>
</comment>
<comment type="interaction">
    <interactant intactId="EBI-87092">
        <id>P00528</id>
    </interactant>
    <interactant intactId="EBI-664624">
        <id>P11346</id>
        <label>Raf</label>
    </interactant>
    <organismsDiffer>false</organismsDiffer>
    <experiments>3</experiments>
</comment>
<comment type="interaction">
    <interactant intactId="EBI-87092">
        <id>P00528</id>
    </interactant>
    <interactant intactId="EBI-426805">
        <id>Q03720</id>
        <label>slo</label>
    </interactant>
    <organismsDiffer>false</organismsDiffer>
    <experiments>3</experiments>
</comment>
<comment type="tissue specificity">
    <text evidence="7">After the first 8 hours of development, accumulates almost exclusively in neural tissues such as the brain, ventral nerve chord, and eye-antennal disks, and in differentiating smooth muscle.</text>
</comment>
<comment type="developmental stage">
    <text evidence="7">Abundant in embryos and pupae, rare in larvae and adults.</text>
</comment>
<comment type="PTM">
    <text evidence="8">Phosphorylated.</text>
</comment>
<comment type="similarity">
    <text evidence="2">Belongs to the protein kinase superfamily. Tyr protein kinase family. SRC subfamily.</text>
</comment>
<gene>
    <name type="primary">Src64B</name>
    <name type="synonym">Src1</name>
    <name type="ORF">CG7524</name>
</gene>
<sequence length="552" mass="63003">MGNKCCSKRQDQELALAYPTGGYKKSDYTFGQTHINSSGGGNMGGVLGQKHNNGGSLDSRYTPDPNHRGPLKIGGKGGVDIIRPRTTPTGVPGVVLKRVVVALYDYKSRDESDLSFMKGDRMEVIDDTESDWWRVVNLTTRQEGLIPLNFVAEERSVNSEDWFFENVLRKEADKLLLAEENPRGTFLVRPSEHNPNGYSLSVKDWEDGRGYHVKHYRIKPLDNGGYYIATNQTFPSLQALVMAYSKNALGLCHILSRPCPKPQPQMWDLGPELRDKYEIPRSEIQLLRKLGRGNFGEVFYGKWRNSIDVAVKTLREGTMSTAAFLQEAAIMKKFRHNRLVALYAVCSQEEPIYIVQEYMSKGSLLDFLREGDGRYLHFEDLIYIATQVASGMEYLESKQLIHRDLAARNVLIGENNVAKICDFGLARVIADDEYCPKQGSRFPVKWTAPEAIIYGKFSIKSDVWSYGILLMELFTYGQVPYPGMHSREVIENIERGFRMPKPTNHYFPDNIYQLLLQCWDAVPEKRPTFEFLNHYFESFSVTSEVPYREVQD</sequence>